<accession>B2LML9</accession>
<sequence length="508" mass="56151">MGLPWYRVHTVVLNDPGRLLSVHIMHTALVAGWAGSMALYELAVFDPSDPVLDPMWRQGMFVIPFMTRLGITNSWGGWSITGGTTTNPGIWSYEGVAGAHIMFSGLCFLAAIWHWVYWDLEIFCDERTGKPSLDLPKIFGIHLFLAGVACFGFGAFHVTGLYGPGIWVSDPYGLTGKVQSVNPSWGVEGFDPFVPGGIASHHIAAGTLGILAGLFHLSVRPPQRLYKGLRMGNIETVLSSSIAAVFFAAFVVAGTMWYGSATTPIELFGPTRYQWDQGYFQQEIYRRVSAGLAENQSLSEVWSKIPEKLAFYDYIGNNPAKGGLFRAGSMDNGDGIAVGWLGHPIFRDKEGRELFVRRMPTFFETFPVVLVDGDGIVRADVPFRRAESKYSVEQVGVTVEFYGGELNGVSYSDPVTVKKYARRAQLGEIFELDRATLKSDGVFRSSPRGWFTFGHASFALLFFFGHIWHGARTLFRDVFAGIDPDLDAQVEFGAFQKLGDPTTRRQAV</sequence>
<keyword id="KW-0148">Chlorophyll</keyword>
<keyword id="KW-0150">Chloroplast</keyword>
<keyword id="KW-0157">Chromophore</keyword>
<keyword id="KW-0472">Membrane</keyword>
<keyword id="KW-0602">Photosynthesis</keyword>
<keyword id="KW-0604">Photosystem II</keyword>
<keyword id="KW-0934">Plastid</keyword>
<keyword id="KW-0793">Thylakoid</keyword>
<keyword id="KW-0812">Transmembrane</keyword>
<keyword id="KW-1133">Transmembrane helix</keyword>
<comment type="function">
    <text evidence="1">One of the components of the core complex of photosystem II (PSII). It binds chlorophyll and helps catalyze the primary light-induced photochemical processes of PSII. PSII is a light-driven water:plastoquinone oxidoreductase, using light energy to abstract electrons from H(2)O, generating O(2) and a proton gradient subsequently used for ATP formation.</text>
</comment>
<comment type="cofactor">
    <text evidence="1">Binds multiple chlorophylls. PSII binds additional chlorophylls, carotenoids and specific lipids.</text>
</comment>
<comment type="subunit">
    <text evidence="1">PSII is composed of 1 copy each of membrane proteins PsbA, PsbB, PsbC, PsbD, PsbE, PsbF, PsbH, PsbI, PsbJ, PsbK, PsbL, PsbM, PsbT, PsbX, PsbY, PsbZ, Psb30/Ycf12, at least 3 peripheral proteins of the oxygen-evolving complex and a large number of cofactors. It forms dimeric complexes.</text>
</comment>
<comment type="subcellular location">
    <subcellularLocation>
        <location evidence="1">Plastid</location>
        <location evidence="1">Chloroplast thylakoid membrane</location>
        <topology evidence="1">Multi-pass membrane protein</topology>
    </subcellularLocation>
</comment>
<comment type="similarity">
    <text evidence="1">Belongs to the PsbB/PsbC family. PsbB subfamily.</text>
</comment>
<protein>
    <recommendedName>
        <fullName evidence="1">Photosystem II CP47 reaction center protein</fullName>
    </recommendedName>
    <alternativeName>
        <fullName evidence="1">PSII 47 kDa protein</fullName>
    </alternativeName>
    <alternativeName>
        <fullName evidence="1">Protein CP-47</fullName>
    </alternativeName>
</protein>
<gene>
    <name evidence="1" type="primary">psbB</name>
    <name type="ordered locus">GuabCp048</name>
</gene>
<feature type="chain" id="PRO_0000359827" description="Photosystem II CP47 reaction center protein">
    <location>
        <begin position="1"/>
        <end position="508"/>
    </location>
</feature>
<feature type="transmembrane region" description="Helical" evidence="1">
    <location>
        <begin position="21"/>
        <end position="36"/>
    </location>
</feature>
<feature type="transmembrane region" description="Helical" evidence="1">
    <location>
        <begin position="101"/>
        <end position="115"/>
    </location>
</feature>
<feature type="transmembrane region" description="Helical" evidence="1">
    <location>
        <begin position="140"/>
        <end position="156"/>
    </location>
</feature>
<feature type="transmembrane region" description="Helical" evidence="1">
    <location>
        <begin position="203"/>
        <end position="218"/>
    </location>
</feature>
<feature type="transmembrane region" description="Helical" evidence="1">
    <location>
        <begin position="237"/>
        <end position="252"/>
    </location>
</feature>
<feature type="transmembrane region" description="Helical" evidence="1">
    <location>
        <begin position="457"/>
        <end position="472"/>
    </location>
</feature>
<name>PSBB_GUIAB</name>
<evidence type="ECO:0000255" key="1">
    <source>
        <dbReference type="HAMAP-Rule" id="MF_01495"/>
    </source>
</evidence>
<proteinExistence type="inferred from homology"/>
<geneLocation type="chloroplast"/>
<dbReference type="EMBL" id="EU549769">
    <property type="protein sequence ID" value="ACB86552.1"/>
    <property type="molecule type" value="Genomic_DNA"/>
</dbReference>
<dbReference type="RefSeq" id="YP_001837386.1">
    <property type="nucleotide sequence ID" value="NC_010601.1"/>
</dbReference>
<dbReference type="SMR" id="B2LML9"/>
<dbReference type="GeneID" id="6219193"/>
<dbReference type="GO" id="GO:0009535">
    <property type="term" value="C:chloroplast thylakoid membrane"/>
    <property type="evidence" value="ECO:0007669"/>
    <property type="project" value="UniProtKB-SubCell"/>
</dbReference>
<dbReference type="GO" id="GO:0009523">
    <property type="term" value="C:photosystem II"/>
    <property type="evidence" value="ECO:0007669"/>
    <property type="project" value="UniProtKB-KW"/>
</dbReference>
<dbReference type="GO" id="GO:0016168">
    <property type="term" value="F:chlorophyll binding"/>
    <property type="evidence" value="ECO:0007669"/>
    <property type="project" value="UniProtKB-UniRule"/>
</dbReference>
<dbReference type="GO" id="GO:0045156">
    <property type="term" value="F:electron transporter, transferring electrons within the cyclic electron transport pathway of photosynthesis activity"/>
    <property type="evidence" value="ECO:0007669"/>
    <property type="project" value="InterPro"/>
</dbReference>
<dbReference type="GO" id="GO:0009772">
    <property type="term" value="P:photosynthetic electron transport in photosystem II"/>
    <property type="evidence" value="ECO:0007669"/>
    <property type="project" value="InterPro"/>
</dbReference>
<dbReference type="FunFam" id="3.10.680.10:FF:000001">
    <property type="entry name" value="Photosystem II CP47 reaction center protein"/>
    <property type="match status" value="1"/>
</dbReference>
<dbReference type="Gene3D" id="3.10.680.10">
    <property type="entry name" value="Photosystem II CP47 reaction center protein"/>
    <property type="match status" value="1"/>
</dbReference>
<dbReference type="HAMAP" id="MF_01495">
    <property type="entry name" value="PSII_PsbB_CP47"/>
    <property type="match status" value="1"/>
</dbReference>
<dbReference type="InterPro" id="IPR000932">
    <property type="entry name" value="PS_antenna-like"/>
</dbReference>
<dbReference type="InterPro" id="IPR036001">
    <property type="entry name" value="PS_II_antenna-like_sf"/>
</dbReference>
<dbReference type="InterPro" id="IPR017486">
    <property type="entry name" value="PSII_PsbB"/>
</dbReference>
<dbReference type="NCBIfam" id="TIGR03039">
    <property type="entry name" value="PS_II_CP47"/>
    <property type="match status" value="1"/>
</dbReference>
<dbReference type="PANTHER" id="PTHR33180">
    <property type="entry name" value="PHOTOSYSTEM II CP43 REACTION CENTER PROTEIN"/>
    <property type="match status" value="1"/>
</dbReference>
<dbReference type="PANTHER" id="PTHR33180:SF38">
    <property type="entry name" value="PHOTOSYSTEM II CP47 REACTION CENTER PROTEIN"/>
    <property type="match status" value="1"/>
</dbReference>
<dbReference type="Pfam" id="PF00421">
    <property type="entry name" value="PSII"/>
    <property type="match status" value="1"/>
</dbReference>
<dbReference type="SUPFAM" id="SSF161077">
    <property type="entry name" value="Photosystem II antenna protein-like"/>
    <property type="match status" value="1"/>
</dbReference>
<reference key="1">
    <citation type="submission" date="2008-03" db="EMBL/GenBank/DDBJ databases">
        <title>Guizotia abyssinica chloroplast sequenced using Solexa.</title>
        <authorList>
            <person name="Kane N.C."/>
            <person name="Dempewolf H."/>
            <person name="Stewart M.L."/>
            <person name="Cronk Q."/>
            <person name="Rieseberrg L.H."/>
        </authorList>
    </citation>
    <scope>NUCLEOTIDE SEQUENCE [LARGE SCALE GENOMIC DNA]</scope>
    <source>
        <strain>cv. PI 508077</strain>
    </source>
</reference>
<organism>
    <name type="scientific">Guizotia abyssinica</name>
    <name type="common">Niger</name>
    <name type="synonym">Ramtilla</name>
    <dbReference type="NCBI Taxonomy" id="4230"/>
    <lineage>
        <taxon>Eukaryota</taxon>
        <taxon>Viridiplantae</taxon>
        <taxon>Streptophyta</taxon>
        <taxon>Embryophyta</taxon>
        <taxon>Tracheophyta</taxon>
        <taxon>Spermatophyta</taxon>
        <taxon>Magnoliopsida</taxon>
        <taxon>eudicotyledons</taxon>
        <taxon>Gunneridae</taxon>
        <taxon>Pentapetalae</taxon>
        <taxon>asterids</taxon>
        <taxon>campanulids</taxon>
        <taxon>Asterales</taxon>
        <taxon>Asteraceae</taxon>
        <taxon>Asteroideae</taxon>
        <taxon>Heliantheae alliance</taxon>
        <taxon>Millerieae</taxon>
        <taxon>Guizotia</taxon>
    </lineage>
</organism>